<reference key="1">
    <citation type="journal article" date="2009" name="Infect. Immun.">
        <title>Comparative genomics reveal extensive transposon-mediated genomic plasticity and diversity among potential effector proteins within the genus Coxiella.</title>
        <authorList>
            <person name="Beare P.A."/>
            <person name="Unsworth N."/>
            <person name="Andoh M."/>
            <person name="Voth D.E."/>
            <person name="Omsland A."/>
            <person name="Gilk S.D."/>
            <person name="Williams K.P."/>
            <person name="Sobral B.W."/>
            <person name="Kupko J.J. III"/>
            <person name="Porcella S.F."/>
            <person name="Samuel J.E."/>
            <person name="Heinzen R.A."/>
        </authorList>
    </citation>
    <scope>NUCLEOTIDE SEQUENCE [LARGE SCALE GENOMIC DNA]</scope>
    <source>
        <strain>CbuK_Q154</strain>
    </source>
</reference>
<feature type="chain" id="PRO_1000090307" description="Holliday junction branch migration complex subunit RuvA">
    <location>
        <begin position="1"/>
        <end position="200"/>
    </location>
</feature>
<feature type="region of interest" description="Domain I" evidence="1">
    <location>
        <begin position="1"/>
        <end position="64"/>
    </location>
</feature>
<feature type="region of interest" description="Domain II" evidence="1">
    <location>
        <begin position="65"/>
        <end position="143"/>
    </location>
</feature>
<feature type="region of interest" description="Disordered" evidence="2">
    <location>
        <begin position="133"/>
        <end position="152"/>
    </location>
</feature>
<feature type="region of interest" description="Flexible linker" evidence="1">
    <location>
        <begin position="144"/>
        <end position="148"/>
    </location>
</feature>
<feature type="region of interest" description="Domain III" evidence="1">
    <location>
        <begin position="149"/>
        <end position="200"/>
    </location>
</feature>
<sequence length="200" mass="22225">MIGHLRGIIVEKQPPYLLLEVAGVGYEITAPLSTFYHLPEPQEEILLYTHLIVREDAHTLYGFHNDHERRLFRALIKVNGVGPKLALAILSGIGPDEFVHCVLNQNIDQLVRIPGVGRKTAERLVIETKDGLSRWHTNDTPSPEGLRSSNTQPTQDAISALMALGYKPQEAKRAIDAIQKPDLSAETLIRLALKQMVLGT</sequence>
<accession>B6J505</accession>
<gene>
    <name evidence="1" type="primary">ruvA</name>
    <name type="ordered locus">CbuK_1795</name>
</gene>
<name>RUVA_COXB1</name>
<evidence type="ECO:0000255" key="1">
    <source>
        <dbReference type="HAMAP-Rule" id="MF_00031"/>
    </source>
</evidence>
<evidence type="ECO:0000256" key="2">
    <source>
        <dbReference type="SAM" id="MobiDB-lite"/>
    </source>
</evidence>
<organism>
    <name type="scientific">Coxiella burnetii (strain CbuK_Q154)</name>
    <name type="common">Coxiella burnetii (strain Q154)</name>
    <dbReference type="NCBI Taxonomy" id="434924"/>
    <lineage>
        <taxon>Bacteria</taxon>
        <taxon>Pseudomonadati</taxon>
        <taxon>Pseudomonadota</taxon>
        <taxon>Gammaproteobacteria</taxon>
        <taxon>Legionellales</taxon>
        <taxon>Coxiellaceae</taxon>
        <taxon>Coxiella</taxon>
    </lineage>
</organism>
<comment type="function">
    <text evidence="1">The RuvA-RuvB-RuvC complex processes Holliday junction (HJ) DNA during genetic recombination and DNA repair, while the RuvA-RuvB complex plays an important role in the rescue of blocked DNA replication forks via replication fork reversal (RFR). RuvA specifically binds to HJ cruciform DNA, conferring on it an open structure. The RuvB hexamer acts as an ATP-dependent pump, pulling dsDNA into and through the RuvAB complex. HJ branch migration allows RuvC to scan DNA until it finds its consensus sequence, where it cleaves and resolves the cruciform DNA.</text>
</comment>
<comment type="subunit">
    <text evidence="1">Homotetramer. Forms an RuvA(8)-RuvB(12)-Holliday junction (HJ) complex. HJ DNA is sandwiched between 2 RuvA tetramers; dsDNA enters through RuvA and exits via RuvB. An RuvB hexamer assembles on each DNA strand where it exits the tetramer. Each RuvB hexamer is contacted by two RuvA subunits (via domain III) on 2 adjacent RuvB subunits; this complex drives branch migration. In the full resolvosome a probable DNA-RuvA(4)-RuvB(12)-RuvC(2) complex forms which resolves the HJ.</text>
</comment>
<comment type="subcellular location">
    <subcellularLocation>
        <location evidence="1">Cytoplasm</location>
    </subcellularLocation>
</comment>
<comment type="domain">
    <text evidence="1">Has three domains with a flexible linker between the domains II and III and assumes an 'L' shape. Domain III is highly mobile and contacts RuvB.</text>
</comment>
<comment type="similarity">
    <text evidence="1">Belongs to the RuvA family.</text>
</comment>
<keyword id="KW-0963">Cytoplasm</keyword>
<keyword id="KW-0227">DNA damage</keyword>
<keyword id="KW-0233">DNA recombination</keyword>
<keyword id="KW-0234">DNA repair</keyword>
<keyword id="KW-0238">DNA-binding</keyword>
<proteinExistence type="inferred from homology"/>
<dbReference type="EMBL" id="CP001020">
    <property type="protein sequence ID" value="ACJ20922.1"/>
    <property type="molecule type" value="Genomic_DNA"/>
</dbReference>
<dbReference type="RefSeq" id="WP_005772102.1">
    <property type="nucleotide sequence ID" value="NC_011528.1"/>
</dbReference>
<dbReference type="SMR" id="B6J505"/>
<dbReference type="KEGG" id="cbc:CbuK_1795"/>
<dbReference type="HOGENOM" id="CLU_087936_0_0_6"/>
<dbReference type="GO" id="GO:0005737">
    <property type="term" value="C:cytoplasm"/>
    <property type="evidence" value="ECO:0007669"/>
    <property type="project" value="UniProtKB-SubCell"/>
</dbReference>
<dbReference type="GO" id="GO:0009379">
    <property type="term" value="C:Holliday junction helicase complex"/>
    <property type="evidence" value="ECO:0007669"/>
    <property type="project" value="InterPro"/>
</dbReference>
<dbReference type="GO" id="GO:0048476">
    <property type="term" value="C:Holliday junction resolvase complex"/>
    <property type="evidence" value="ECO:0007669"/>
    <property type="project" value="UniProtKB-UniRule"/>
</dbReference>
<dbReference type="GO" id="GO:0005524">
    <property type="term" value="F:ATP binding"/>
    <property type="evidence" value="ECO:0007669"/>
    <property type="project" value="InterPro"/>
</dbReference>
<dbReference type="GO" id="GO:0000400">
    <property type="term" value="F:four-way junction DNA binding"/>
    <property type="evidence" value="ECO:0007669"/>
    <property type="project" value="UniProtKB-UniRule"/>
</dbReference>
<dbReference type="GO" id="GO:0009378">
    <property type="term" value="F:four-way junction helicase activity"/>
    <property type="evidence" value="ECO:0007669"/>
    <property type="project" value="InterPro"/>
</dbReference>
<dbReference type="GO" id="GO:0006310">
    <property type="term" value="P:DNA recombination"/>
    <property type="evidence" value="ECO:0007669"/>
    <property type="project" value="UniProtKB-UniRule"/>
</dbReference>
<dbReference type="GO" id="GO:0006281">
    <property type="term" value="P:DNA repair"/>
    <property type="evidence" value="ECO:0007669"/>
    <property type="project" value="UniProtKB-UniRule"/>
</dbReference>
<dbReference type="CDD" id="cd14332">
    <property type="entry name" value="UBA_RuvA_C"/>
    <property type="match status" value="1"/>
</dbReference>
<dbReference type="Gene3D" id="1.10.150.20">
    <property type="entry name" value="5' to 3' exonuclease, C-terminal subdomain"/>
    <property type="match status" value="1"/>
</dbReference>
<dbReference type="Gene3D" id="1.10.8.10">
    <property type="entry name" value="DNA helicase RuvA subunit, C-terminal domain"/>
    <property type="match status" value="1"/>
</dbReference>
<dbReference type="Gene3D" id="2.40.50.140">
    <property type="entry name" value="Nucleic acid-binding proteins"/>
    <property type="match status" value="1"/>
</dbReference>
<dbReference type="HAMAP" id="MF_00031">
    <property type="entry name" value="DNA_HJ_migration_RuvA"/>
    <property type="match status" value="1"/>
</dbReference>
<dbReference type="InterPro" id="IPR013849">
    <property type="entry name" value="DNA_helicase_Holl-junc_RuvA_I"/>
</dbReference>
<dbReference type="InterPro" id="IPR003583">
    <property type="entry name" value="Hlx-hairpin-Hlx_DNA-bd_motif"/>
</dbReference>
<dbReference type="InterPro" id="IPR012340">
    <property type="entry name" value="NA-bd_OB-fold"/>
</dbReference>
<dbReference type="InterPro" id="IPR000085">
    <property type="entry name" value="RuvA"/>
</dbReference>
<dbReference type="InterPro" id="IPR010994">
    <property type="entry name" value="RuvA_2-like"/>
</dbReference>
<dbReference type="InterPro" id="IPR011114">
    <property type="entry name" value="RuvA_C"/>
</dbReference>
<dbReference type="InterPro" id="IPR036267">
    <property type="entry name" value="RuvA_C_sf"/>
</dbReference>
<dbReference type="NCBIfam" id="TIGR00084">
    <property type="entry name" value="ruvA"/>
    <property type="match status" value="1"/>
</dbReference>
<dbReference type="Pfam" id="PF14520">
    <property type="entry name" value="HHH_5"/>
    <property type="match status" value="1"/>
</dbReference>
<dbReference type="Pfam" id="PF07499">
    <property type="entry name" value="RuvA_C"/>
    <property type="match status" value="1"/>
</dbReference>
<dbReference type="Pfam" id="PF01330">
    <property type="entry name" value="RuvA_N"/>
    <property type="match status" value="1"/>
</dbReference>
<dbReference type="SMART" id="SM00278">
    <property type="entry name" value="HhH1"/>
    <property type="match status" value="2"/>
</dbReference>
<dbReference type="SUPFAM" id="SSF46929">
    <property type="entry name" value="DNA helicase RuvA subunit, C-terminal domain"/>
    <property type="match status" value="1"/>
</dbReference>
<dbReference type="SUPFAM" id="SSF50249">
    <property type="entry name" value="Nucleic acid-binding proteins"/>
    <property type="match status" value="1"/>
</dbReference>
<dbReference type="SUPFAM" id="SSF47781">
    <property type="entry name" value="RuvA domain 2-like"/>
    <property type="match status" value="1"/>
</dbReference>
<protein>
    <recommendedName>
        <fullName evidence="1">Holliday junction branch migration complex subunit RuvA</fullName>
    </recommendedName>
</protein>